<feature type="chain" id="PRO_1000072427" description="Transaldolase">
    <location>
        <begin position="1"/>
        <end position="317"/>
    </location>
</feature>
<feature type="active site" description="Schiff-base intermediate with substrate" evidence="2">
    <location>
        <position position="132"/>
    </location>
</feature>
<evidence type="ECO:0000250" key="1"/>
<evidence type="ECO:0000255" key="2">
    <source>
        <dbReference type="HAMAP-Rule" id="MF_00492"/>
    </source>
</evidence>
<accession>A6VLW0</accession>
<dbReference type="EC" id="2.2.1.2" evidence="2"/>
<dbReference type="EMBL" id="CP000746">
    <property type="protein sequence ID" value="ABR73957.1"/>
    <property type="molecule type" value="Genomic_DNA"/>
</dbReference>
<dbReference type="RefSeq" id="WP_012072337.1">
    <property type="nucleotide sequence ID" value="NC_009655.1"/>
</dbReference>
<dbReference type="SMR" id="A6VLW0"/>
<dbReference type="STRING" id="339671.Asuc_0582"/>
<dbReference type="KEGG" id="asu:Asuc_0582"/>
<dbReference type="eggNOG" id="COG0176">
    <property type="taxonomic scope" value="Bacteria"/>
</dbReference>
<dbReference type="HOGENOM" id="CLU_047470_0_1_6"/>
<dbReference type="OrthoDB" id="9809101at2"/>
<dbReference type="UniPathway" id="UPA00115">
    <property type="reaction ID" value="UER00414"/>
</dbReference>
<dbReference type="Proteomes" id="UP000001114">
    <property type="component" value="Chromosome"/>
</dbReference>
<dbReference type="GO" id="GO:0005829">
    <property type="term" value="C:cytosol"/>
    <property type="evidence" value="ECO:0007669"/>
    <property type="project" value="TreeGrafter"/>
</dbReference>
<dbReference type="GO" id="GO:0004801">
    <property type="term" value="F:transaldolase activity"/>
    <property type="evidence" value="ECO:0000250"/>
    <property type="project" value="UniProtKB"/>
</dbReference>
<dbReference type="GO" id="GO:0005975">
    <property type="term" value="P:carbohydrate metabolic process"/>
    <property type="evidence" value="ECO:0007669"/>
    <property type="project" value="InterPro"/>
</dbReference>
<dbReference type="GO" id="GO:0006098">
    <property type="term" value="P:pentose-phosphate shunt"/>
    <property type="evidence" value="ECO:0007669"/>
    <property type="project" value="UniProtKB-UniRule"/>
</dbReference>
<dbReference type="CDD" id="cd00957">
    <property type="entry name" value="Transaldolase_TalAB"/>
    <property type="match status" value="1"/>
</dbReference>
<dbReference type="FunFam" id="3.20.20.70:FF:000002">
    <property type="entry name" value="Transaldolase"/>
    <property type="match status" value="1"/>
</dbReference>
<dbReference type="Gene3D" id="3.20.20.70">
    <property type="entry name" value="Aldolase class I"/>
    <property type="match status" value="1"/>
</dbReference>
<dbReference type="HAMAP" id="MF_00492">
    <property type="entry name" value="Transaldolase_1"/>
    <property type="match status" value="1"/>
</dbReference>
<dbReference type="InterPro" id="IPR013785">
    <property type="entry name" value="Aldolase_TIM"/>
</dbReference>
<dbReference type="InterPro" id="IPR001585">
    <property type="entry name" value="TAL/FSA"/>
</dbReference>
<dbReference type="InterPro" id="IPR004730">
    <property type="entry name" value="Transaldolase_1"/>
</dbReference>
<dbReference type="InterPro" id="IPR018225">
    <property type="entry name" value="Transaldolase_AS"/>
</dbReference>
<dbReference type="NCBIfam" id="NF009001">
    <property type="entry name" value="PRK12346.1"/>
    <property type="match status" value="1"/>
</dbReference>
<dbReference type="NCBIfam" id="TIGR00874">
    <property type="entry name" value="talAB"/>
    <property type="match status" value="1"/>
</dbReference>
<dbReference type="PANTHER" id="PTHR10683">
    <property type="entry name" value="TRANSALDOLASE"/>
    <property type="match status" value="1"/>
</dbReference>
<dbReference type="PANTHER" id="PTHR10683:SF18">
    <property type="entry name" value="TRANSALDOLASE"/>
    <property type="match status" value="1"/>
</dbReference>
<dbReference type="Pfam" id="PF00923">
    <property type="entry name" value="TAL_FSA"/>
    <property type="match status" value="1"/>
</dbReference>
<dbReference type="SUPFAM" id="SSF51569">
    <property type="entry name" value="Aldolase"/>
    <property type="match status" value="1"/>
</dbReference>
<dbReference type="PROSITE" id="PS01054">
    <property type="entry name" value="TRANSALDOLASE_1"/>
    <property type="match status" value="1"/>
</dbReference>
<dbReference type="PROSITE" id="PS00958">
    <property type="entry name" value="TRANSALDOLASE_2"/>
    <property type="match status" value="1"/>
</dbReference>
<organism>
    <name type="scientific">Actinobacillus succinogenes (strain ATCC 55618 / DSM 22257 / CCUG 43843 / 130Z)</name>
    <dbReference type="NCBI Taxonomy" id="339671"/>
    <lineage>
        <taxon>Bacteria</taxon>
        <taxon>Pseudomonadati</taxon>
        <taxon>Pseudomonadota</taxon>
        <taxon>Gammaproteobacteria</taxon>
        <taxon>Pasteurellales</taxon>
        <taxon>Pasteurellaceae</taxon>
        <taxon>Actinobacillus</taxon>
    </lineage>
</organism>
<protein>
    <recommendedName>
        <fullName evidence="2">Transaldolase</fullName>
        <ecNumber evidence="2">2.2.1.2</ecNumber>
    </recommendedName>
</protein>
<comment type="function">
    <text evidence="2">Transaldolase is important for the balance of metabolites in the pentose-phosphate pathway.</text>
</comment>
<comment type="catalytic activity">
    <reaction evidence="2">
        <text>D-sedoheptulose 7-phosphate + D-glyceraldehyde 3-phosphate = D-erythrose 4-phosphate + beta-D-fructose 6-phosphate</text>
        <dbReference type="Rhea" id="RHEA:17053"/>
        <dbReference type="ChEBI" id="CHEBI:16897"/>
        <dbReference type="ChEBI" id="CHEBI:57483"/>
        <dbReference type="ChEBI" id="CHEBI:57634"/>
        <dbReference type="ChEBI" id="CHEBI:59776"/>
        <dbReference type="EC" id="2.2.1.2"/>
    </reaction>
</comment>
<comment type="pathway">
    <text evidence="2">Carbohydrate degradation; pentose phosphate pathway; D-glyceraldehyde 3-phosphate and beta-D-fructose 6-phosphate from D-ribose 5-phosphate and D-xylulose 5-phosphate (non-oxidative stage): step 2/3.</text>
</comment>
<comment type="subunit">
    <text evidence="1">Homodimer.</text>
</comment>
<comment type="subcellular location">
    <subcellularLocation>
        <location evidence="2">Cytoplasm</location>
    </subcellularLocation>
</comment>
<comment type="similarity">
    <text evidence="2">Belongs to the transaldolase family. Type 1 subfamily.</text>
</comment>
<gene>
    <name evidence="2" type="primary">tal</name>
    <name type="ordered locus">Asuc_0582</name>
</gene>
<sequence length="317" mass="34912">MTTQLDALKQMTVVVADTGDIEAMKLYKPQDATTNPSLILSASALPQYVSLIDDAVAYAKAKSSDKAQQLIDAEDKLAVNIGLEILKLVPGRISTEVDARLSYDIQGTIEKARKIIALYNEAGVANDRILIKVASTWQGIRAAEVLEKEGINCNLTLLFSQAQARACAEAGVYLISPFVGRILDWYKANSDKQEYAPAEDPGVISVTQIYNYYKQYGYKTVVMGASFRNIGEITELAGCDRLTIAPPLLKQLQENEAPLARKLEYKGEVQTRPAPMTEAEFYWEHNADPMAVEKLAEGIRKFAADIEKLEAMLAAKL</sequence>
<name>TAL_ACTSZ</name>
<reference key="1">
    <citation type="journal article" date="2010" name="BMC Genomics">
        <title>A genomic perspective on the potential of Actinobacillus succinogenes for industrial succinate production.</title>
        <authorList>
            <person name="McKinlay J.B."/>
            <person name="Laivenieks M."/>
            <person name="Schindler B.D."/>
            <person name="McKinlay A.A."/>
            <person name="Siddaramappa S."/>
            <person name="Challacombe J.F."/>
            <person name="Lowry S.R."/>
            <person name="Clum A."/>
            <person name="Lapidus A.L."/>
            <person name="Burkhart K.B."/>
            <person name="Harkins V."/>
            <person name="Vieille C."/>
        </authorList>
    </citation>
    <scope>NUCLEOTIDE SEQUENCE [LARGE SCALE GENOMIC DNA]</scope>
    <source>
        <strain>ATCC 55618 / DSM 22257 / CCUG 43843 / 130Z</strain>
    </source>
</reference>
<proteinExistence type="inferred from homology"/>
<keyword id="KW-0963">Cytoplasm</keyword>
<keyword id="KW-0570">Pentose shunt</keyword>
<keyword id="KW-1185">Reference proteome</keyword>
<keyword id="KW-0704">Schiff base</keyword>
<keyword id="KW-0808">Transferase</keyword>